<comment type="function">
    <text evidence="1">The RuvA-RuvB-RuvC complex processes Holliday junction (HJ) DNA during genetic recombination and DNA repair, while the RuvA-RuvB complex plays an important role in the rescue of blocked DNA replication forks via replication fork reversal (RFR). RuvA specifically binds to HJ cruciform DNA, conferring on it an open structure. The RuvB hexamer acts as an ATP-dependent pump, pulling dsDNA into and through the RuvAB complex. HJ branch migration allows RuvC to scan DNA until it finds its consensus sequence, where it cleaves and resolves the cruciform DNA.</text>
</comment>
<comment type="subunit">
    <text evidence="1">Homotetramer. Forms an RuvA(8)-RuvB(12)-Holliday junction (HJ) complex. HJ DNA is sandwiched between 2 RuvA tetramers; dsDNA enters through RuvA and exits via RuvB. An RuvB hexamer assembles on each DNA strand where it exits the tetramer. Each RuvB hexamer is contacted by two RuvA subunits (via domain III) on 2 adjacent RuvB subunits; this complex drives branch migration. In the full resolvosome a probable DNA-RuvA(4)-RuvB(12)-RuvC(2) complex forms which resolves the HJ.</text>
</comment>
<comment type="subcellular location">
    <subcellularLocation>
        <location evidence="1">Cytoplasm</location>
    </subcellularLocation>
</comment>
<comment type="domain">
    <text evidence="1">Has three domains with a flexible linker between the domains II and III and assumes an 'L' shape. Domain III is highly mobile and contacts RuvB.</text>
</comment>
<comment type="similarity">
    <text evidence="1">Belongs to the RuvA family.</text>
</comment>
<sequence>MNYLIFKVIYANANIVVGEHNFIGYQIRIPKDYELEINKFCKLYLYEYISIMPNKNLIIKDLYGFRTYNERLLFIDLISINSIGPKTAINILKYDIDTIIDAIATKNIDYLITIKGINQRNANLICDQLNYKYINKVNDKNNWAKELSIGLENLGYTKKDIEYAITKVKINSQQDIDISEIISSAIKEISLRHEN</sequence>
<protein>
    <recommendedName>
        <fullName evidence="1">Holliday junction branch migration complex subunit RuvA</fullName>
    </recommendedName>
</protein>
<feature type="chain" id="PRO_1000074445" description="Holliday junction branch migration complex subunit RuvA">
    <location>
        <begin position="1"/>
        <end position="195"/>
    </location>
</feature>
<feature type="region of interest" description="Domain I" evidence="1">
    <location>
        <begin position="1"/>
        <end position="66"/>
    </location>
</feature>
<feature type="region of interest" description="Domain II" evidence="1">
    <location>
        <begin position="67"/>
        <end position="141"/>
    </location>
</feature>
<feature type="region of interest" description="Domain III" evidence="1">
    <location>
        <begin position="141"/>
        <end position="195"/>
    </location>
</feature>
<feature type="region of interest" description="Flexible linker" evidence="1">
    <location>
        <position position="141"/>
    </location>
</feature>
<organism>
    <name type="scientific">Ureaplasma parvum serovar 3 (strain ATCC 27815 / 27 / NCTC 11736)</name>
    <dbReference type="NCBI Taxonomy" id="505682"/>
    <lineage>
        <taxon>Bacteria</taxon>
        <taxon>Bacillati</taxon>
        <taxon>Mycoplasmatota</taxon>
        <taxon>Mycoplasmoidales</taxon>
        <taxon>Mycoplasmoidaceae</taxon>
        <taxon>Ureaplasma</taxon>
    </lineage>
</organism>
<dbReference type="EMBL" id="CP000942">
    <property type="protein sequence ID" value="ACA33061.1"/>
    <property type="molecule type" value="Genomic_DNA"/>
</dbReference>
<dbReference type="RefSeq" id="WP_006688612.1">
    <property type="nucleotide sequence ID" value="NC_010503.1"/>
</dbReference>
<dbReference type="SMR" id="B1AJ90"/>
<dbReference type="GeneID" id="29672569"/>
<dbReference type="KEGG" id="upa:UPA3_0468"/>
<dbReference type="HOGENOM" id="CLU_087936_1_1_14"/>
<dbReference type="Proteomes" id="UP000002162">
    <property type="component" value="Chromosome"/>
</dbReference>
<dbReference type="GO" id="GO:0005737">
    <property type="term" value="C:cytoplasm"/>
    <property type="evidence" value="ECO:0007669"/>
    <property type="project" value="UniProtKB-SubCell"/>
</dbReference>
<dbReference type="GO" id="GO:0009379">
    <property type="term" value="C:Holliday junction helicase complex"/>
    <property type="evidence" value="ECO:0007669"/>
    <property type="project" value="InterPro"/>
</dbReference>
<dbReference type="GO" id="GO:0048476">
    <property type="term" value="C:Holliday junction resolvase complex"/>
    <property type="evidence" value="ECO:0007669"/>
    <property type="project" value="UniProtKB-UniRule"/>
</dbReference>
<dbReference type="GO" id="GO:0005524">
    <property type="term" value="F:ATP binding"/>
    <property type="evidence" value="ECO:0007669"/>
    <property type="project" value="InterPro"/>
</dbReference>
<dbReference type="GO" id="GO:0000400">
    <property type="term" value="F:four-way junction DNA binding"/>
    <property type="evidence" value="ECO:0007669"/>
    <property type="project" value="UniProtKB-UniRule"/>
</dbReference>
<dbReference type="GO" id="GO:0009378">
    <property type="term" value="F:four-way junction helicase activity"/>
    <property type="evidence" value="ECO:0007669"/>
    <property type="project" value="InterPro"/>
</dbReference>
<dbReference type="GO" id="GO:0006310">
    <property type="term" value="P:DNA recombination"/>
    <property type="evidence" value="ECO:0007669"/>
    <property type="project" value="UniProtKB-UniRule"/>
</dbReference>
<dbReference type="GO" id="GO:0006281">
    <property type="term" value="P:DNA repair"/>
    <property type="evidence" value="ECO:0007669"/>
    <property type="project" value="UniProtKB-UniRule"/>
</dbReference>
<dbReference type="CDD" id="cd14332">
    <property type="entry name" value="UBA_RuvA_C"/>
    <property type="match status" value="1"/>
</dbReference>
<dbReference type="Gene3D" id="1.10.150.20">
    <property type="entry name" value="5' to 3' exonuclease, C-terminal subdomain"/>
    <property type="match status" value="1"/>
</dbReference>
<dbReference type="HAMAP" id="MF_00031">
    <property type="entry name" value="DNA_HJ_migration_RuvA"/>
    <property type="match status" value="1"/>
</dbReference>
<dbReference type="InterPro" id="IPR000085">
    <property type="entry name" value="RuvA"/>
</dbReference>
<dbReference type="InterPro" id="IPR010994">
    <property type="entry name" value="RuvA_2-like"/>
</dbReference>
<dbReference type="InterPro" id="IPR011114">
    <property type="entry name" value="RuvA_C"/>
</dbReference>
<dbReference type="NCBIfam" id="TIGR00084">
    <property type="entry name" value="ruvA"/>
    <property type="match status" value="1"/>
</dbReference>
<dbReference type="Pfam" id="PF14520">
    <property type="entry name" value="HHH_5"/>
    <property type="match status" value="1"/>
</dbReference>
<dbReference type="Pfam" id="PF07499">
    <property type="entry name" value="RuvA_C"/>
    <property type="match status" value="1"/>
</dbReference>
<dbReference type="SUPFAM" id="SSF47781">
    <property type="entry name" value="RuvA domain 2-like"/>
    <property type="match status" value="1"/>
</dbReference>
<evidence type="ECO:0000255" key="1">
    <source>
        <dbReference type="HAMAP-Rule" id="MF_00031"/>
    </source>
</evidence>
<gene>
    <name evidence="1" type="primary">ruvA</name>
    <name type="ordered locus">UPA3_0468</name>
</gene>
<keyword id="KW-0963">Cytoplasm</keyword>
<keyword id="KW-0227">DNA damage</keyword>
<keyword id="KW-0233">DNA recombination</keyword>
<keyword id="KW-0234">DNA repair</keyword>
<keyword id="KW-0238">DNA-binding</keyword>
<reference key="1">
    <citation type="submission" date="2008-02" db="EMBL/GenBank/DDBJ databases">
        <title>Genome sequence of Ureaplasma parvum serovar 3.</title>
        <authorList>
            <person name="Methe B.A."/>
            <person name="Glass J."/>
            <person name="Waites K."/>
            <person name="Shrivastava S."/>
        </authorList>
    </citation>
    <scope>NUCLEOTIDE SEQUENCE [LARGE SCALE GENOMIC DNA]</scope>
    <source>
        <strain>ATCC 27815 / 27 / NCTC 11736</strain>
    </source>
</reference>
<proteinExistence type="inferred from homology"/>
<accession>B1AJ90</accession>
<name>RUVA_UREP2</name>